<keyword id="KW-0349">Heme</keyword>
<keyword id="KW-0408">Iron</keyword>
<keyword id="KW-0472">Membrane</keyword>
<keyword id="KW-0479">Metal-binding</keyword>
<keyword id="KW-0503">Monooxygenase</keyword>
<keyword id="KW-0560">Oxidoreductase</keyword>
<keyword id="KW-0611">Plant defense</keyword>
<keyword id="KW-1185">Reference proteome</keyword>
<keyword id="KW-0812">Transmembrane</keyword>
<keyword id="KW-1133">Transmembrane helix</keyword>
<reference key="1">
    <citation type="journal article" date="2009" name="Plant Cell">
        <title>The gene controlling the indole glucosinolate modifier1 quantitative trait locus alters indole glucosinolate structures and aphid resistance in Arabidopsis.</title>
        <authorList>
            <person name="Pfalz M."/>
            <person name="Vogel H."/>
            <person name="Kroymann J."/>
        </authorList>
    </citation>
    <scope>NUCLEOTIDE SEQUENCE [GENOMIC DNA]</scope>
</reference>
<reference key="2">
    <citation type="journal article" date="2000" name="DNA Res.">
        <title>Structural analysis of Arabidopsis thaliana chromosome 5. X. Sequence features of the regions of 3,076,755 bp covered by sixty P1 and TAC clones.</title>
        <authorList>
            <person name="Sato S."/>
            <person name="Nakamura Y."/>
            <person name="Kaneko T."/>
            <person name="Katoh T."/>
            <person name="Asamizu E."/>
            <person name="Kotani H."/>
            <person name="Tabata S."/>
        </authorList>
    </citation>
    <scope>NUCLEOTIDE SEQUENCE [LARGE SCALE GENOMIC DNA]</scope>
    <source>
        <strain>cv. Columbia</strain>
    </source>
</reference>
<reference key="3">
    <citation type="journal article" date="2017" name="Plant J.">
        <title>Araport11: a complete reannotation of the Arabidopsis thaliana reference genome.</title>
        <authorList>
            <person name="Cheng C.Y."/>
            <person name="Krishnakumar V."/>
            <person name="Chan A.P."/>
            <person name="Thibaud-Nissen F."/>
            <person name="Schobel S."/>
            <person name="Town C.D."/>
        </authorList>
    </citation>
    <scope>GENOME REANNOTATION</scope>
    <source>
        <strain>cv. Columbia</strain>
    </source>
</reference>
<reference key="4">
    <citation type="journal article" date="2003" name="Science">
        <title>Empirical analysis of transcriptional activity in the Arabidopsis genome.</title>
        <authorList>
            <person name="Yamada K."/>
            <person name="Lim J."/>
            <person name="Dale J.M."/>
            <person name="Chen H."/>
            <person name="Shinn P."/>
            <person name="Palm C.J."/>
            <person name="Southwick A.M."/>
            <person name="Wu H.C."/>
            <person name="Kim C.J."/>
            <person name="Nguyen M."/>
            <person name="Pham P.K."/>
            <person name="Cheuk R.F."/>
            <person name="Karlin-Newmann G."/>
            <person name="Liu S.X."/>
            <person name="Lam B."/>
            <person name="Sakano H."/>
            <person name="Wu T."/>
            <person name="Yu G."/>
            <person name="Miranda M."/>
            <person name="Quach H.L."/>
            <person name="Tripp M."/>
            <person name="Chang C.H."/>
            <person name="Lee J.M."/>
            <person name="Toriumi M.J."/>
            <person name="Chan M.M."/>
            <person name="Tang C.C."/>
            <person name="Onodera C.S."/>
            <person name="Deng J.M."/>
            <person name="Akiyama K."/>
            <person name="Ansari Y."/>
            <person name="Arakawa T."/>
            <person name="Banh J."/>
            <person name="Banno F."/>
            <person name="Bowser L."/>
            <person name="Brooks S.Y."/>
            <person name="Carninci P."/>
            <person name="Chao Q."/>
            <person name="Choy N."/>
            <person name="Enju A."/>
            <person name="Goldsmith A.D."/>
            <person name="Gurjal M."/>
            <person name="Hansen N.F."/>
            <person name="Hayashizaki Y."/>
            <person name="Johnson-Hopson C."/>
            <person name="Hsuan V.W."/>
            <person name="Iida K."/>
            <person name="Karnes M."/>
            <person name="Khan S."/>
            <person name="Koesema E."/>
            <person name="Ishida J."/>
            <person name="Jiang P.X."/>
            <person name="Jones T."/>
            <person name="Kawai J."/>
            <person name="Kamiya A."/>
            <person name="Meyers C."/>
            <person name="Nakajima M."/>
            <person name="Narusaka M."/>
            <person name="Seki M."/>
            <person name="Sakurai T."/>
            <person name="Satou M."/>
            <person name="Tamse R."/>
            <person name="Vaysberg M."/>
            <person name="Wallender E.K."/>
            <person name="Wong C."/>
            <person name="Yamamura Y."/>
            <person name="Yuan S."/>
            <person name="Shinozaki K."/>
            <person name="Davis R.W."/>
            <person name="Theologis A."/>
            <person name="Ecker J.R."/>
        </authorList>
    </citation>
    <scope>NUCLEOTIDE SEQUENCE [LARGE SCALE MRNA]</scope>
    <source>
        <strain>cv. Columbia</strain>
    </source>
</reference>
<reference key="5">
    <citation type="journal article" date="2009" name="Science">
        <title>A glucosinolate metabolism pathway in living plant cells mediates broad-spectrum antifungal defense.</title>
        <authorList>
            <person name="Bednarek P."/>
            <person name="Pislewska-Bednarek M."/>
            <person name="Svatos A."/>
            <person name="Schneider B."/>
            <person name="Doubsky J."/>
            <person name="Mansurova M."/>
            <person name="Humphry M."/>
            <person name="Consonni C."/>
            <person name="Panstruga R."/>
            <person name="Sanchez-Vallet A."/>
            <person name="Molina A."/>
            <person name="Schulze-Lefert P."/>
        </authorList>
    </citation>
    <scope>FUNCTION</scope>
</reference>
<reference key="6">
    <citation type="journal article" date="2010" name="Plant Cell">
        <title>Entry mode-dependent function of an indole glucosinolate pathway in Arabidopsis for nonhost resistance against anthracnose pathogens.</title>
        <authorList>
            <person name="Hiruma K."/>
            <person name="Onozawa-Komori M."/>
            <person name="Takahashi F."/>
            <person name="Asakura M."/>
            <person name="Bednarek P."/>
            <person name="Okuno T."/>
            <person name="Schulze-Lefert P."/>
            <person name="Takano Y."/>
        </authorList>
    </citation>
    <scope>FUNCTION</scope>
</reference>
<reference key="7">
    <citation type="journal article" date="2010" name="Plant J.">
        <title>Tryptophan-derived secondary metabolites in Arabidopsis thaliana confer non-host resistance to necrotrophic Plectosphaerella cucumerina fungi.</title>
        <authorList>
            <person name="Sanchez-Vallet A."/>
            <person name="Ramos B."/>
            <person name="Bednarek P."/>
            <person name="Lopez G."/>
            <person name="Pislewska-Bednarek M."/>
            <person name="Schulze-Lefert P."/>
            <person name="Molina A."/>
        </authorList>
    </citation>
    <scope>FUNCTION</scope>
</reference>
<reference key="8">
    <citation type="journal article" date="2011" name="Plant Cell">
        <title>Metabolic engineering in Nicotiana benthamiana reveals key enzyme functions in Arabidopsis indole glucosinolate modification.</title>
        <authorList>
            <person name="Pfalz M."/>
            <person name="Mikkelsen M.D."/>
            <person name="Bednarek P."/>
            <person name="Olsen C.E."/>
            <person name="Halkier B.A."/>
            <person name="Kroymann J."/>
        </authorList>
    </citation>
    <scope>FUNCTION</scope>
</reference>
<reference key="9">
    <citation type="journal article" date="2013" name="Mol. Plant Pathol.">
        <title>Priming of the Arabidopsis pattern-triggered immunity response upon infection by necrotrophic Pectobacterium carotovorum bacteria.</title>
        <authorList>
            <person name="Po-Wen C."/>
            <person name="Singh P."/>
            <person name="Zimmerli L."/>
        </authorList>
    </citation>
    <scope>INDUCTION</scope>
</reference>
<gene>
    <name evidence="10" type="primary">CYP81F2</name>
    <name evidence="9" type="synonym">IGM1</name>
    <name evidence="12" type="ordered locus">At5g57220</name>
    <name evidence="13" type="ORF">MJB24.3</name>
</gene>
<protein>
    <recommendedName>
        <fullName evidence="11">Cytochrome P450 81F2</fullName>
        <ecNumber evidence="11">1.14.-.-</ecNumber>
    </recommendedName>
    <alternativeName>
        <fullName evidence="9">Protein INDOLE GLUCOSINOLATE MODIFIER 1</fullName>
    </alternativeName>
</protein>
<dbReference type="EC" id="1.14.-.-" evidence="11"/>
<dbReference type="EMBL" id="FM208179">
    <property type="protein sequence ID" value="CAR63887.1"/>
    <property type="molecule type" value="Genomic_DNA"/>
</dbReference>
<dbReference type="EMBL" id="AB019233">
    <property type="protein sequence ID" value="BAA96945.1"/>
    <property type="molecule type" value="Genomic_DNA"/>
</dbReference>
<dbReference type="EMBL" id="CP002688">
    <property type="protein sequence ID" value="AED96867.1"/>
    <property type="molecule type" value="Genomic_DNA"/>
</dbReference>
<dbReference type="EMBL" id="AY065209">
    <property type="protein sequence ID" value="AAL38685.1"/>
    <property type="molecule type" value="mRNA"/>
</dbReference>
<dbReference type="EMBL" id="AY096511">
    <property type="protein sequence ID" value="AAM20161.1"/>
    <property type="molecule type" value="mRNA"/>
</dbReference>
<dbReference type="RefSeq" id="NP_200532.1">
    <property type="nucleotide sequence ID" value="NM_125104.3"/>
</dbReference>
<dbReference type="SMR" id="Q9LVD6"/>
<dbReference type="FunCoup" id="Q9LVD6">
    <property type="interactions" value="405"/>
</dbReference>
<dbReference type="STRING" id="3702.Q9LVD6"/>
<dbReference type="GlyGen" id="Q9LVD6">
    <property type="glycosylation" value="1 site"/>
</dbReference>
<dbReference type="PaxDb" id="3702-AT5G57220.1"/>
<dbReference type="ProteomicsDB" id="240531"/>
<dbReference type="EnsemblPlants" id="AT5G57220.1">
    <property type="protein sequence ID" value="AT5G57220.1"/>
    <property type="gene ID" value="AT5G57220"/>
</dbReference>
<dbReference type="GeneID" id="835828"/>
<dbReference type="Gramene" id="AT5G57220.1">
    <property type="protein sequence ID" value="AT5G57220.1"/>
    <property type="gene ID" value="AT5G57220"/>
</dbReference>
<dbReference type="KEGG" id="ath:AT5G57220"/>
<dbReference type="Araport" id="AT5G57220"/>
<dbReference type="TAIR" id="AT5G57220">
    <property type="gene designation" value="CYP81F2"/>
</dbReference>
<dbReference type="eggNOG" id="KOG0156">
    <property type="taxonomic scope" value="Eukaryota"/>
</dbReference>
<dbReference type="HOGENOM" id="CLU_001570_4_0_1"/>
<dbReference type="InParanoid" id="Q9LVD6"/>
<dbReference type="OMA" id="YLAMNTI"/>
<dbReference type="PhylomeDB" id="Q9LVD6"/>
<dbReference type="BioCyc" id="ARA:AT5G57220-MONOMER"/>
<dbReference type="BioCyc" id="MetaCyc:AT5G57220-MONOMER"/>
<dbReference type="PRO" id="PR:Q9LVD6"/>
<dbReference type="Proteomes" id="UP000006548">
    <property type="component" value="Chromosome 5"/>
</dbReference>
<dbReference type="ExpressionAtlas" id="Q9LVD6">
    <property type="expression patterns" value="baseline and differential"/>
</dbReference>
<dbReference type="GO" id="GO:0016020">
    <property type="term" value="C:membrane"/>
    <property type="evidence" value="ECO:0007669"/>
    <property type="project" value="UniProtKB-SubCell"/>
</dbReference>
<dbReference type="GO" id="GO:0020037">
    <property type="term" value="F:heme binding"/>
    <property type="evidence" value="ECO:0007669"/>
    <property type="project" value="InterPro"/>
</dbReference>
<dbReference type="GO" id="GO:0005506">
    <property type="term" value="F:iron ion binding"/>
    <property type="evidence" value="ECO:0007669"/>
    <property type="project" value="InterPro"/>
</dbReference>
<dbReference type="GO" id="GO:0004497">
    <property type="term" value="F:monooxygenase activity"/>
    <property type="evidence" value="ECO:0007669"/>
    <property type="project" value="UniProtKB-KW"/>
</dbReference>
<dbReference type="GO" id="GO:0016705">
    <property type="term" value="F:oxidoreductase activity, acting on paired donors, with incorporation or reduction of molecular oxygen"/>
    <property type="evidence" value="ECO:0007669"/>
    <property type="project" value="InterPro"/>
</dbReference>
<dbReference type="GO" id="GO:0071456">
    <property type="term" value="P:cellular response to hypoxia"/>
    <property type="evidence" value="ECO:0000270"/>
    <property type="project" value="TAIR"/>
</dbReference>
<dbReference type="GO" id="GO:0052544">
    <property type="term" value="P:defense response by callose deposition in cell wall"/>
    <property type="evidence" value="ECO:0000315"/>
    <property type="project" value="TAIR"/>
</dbReference>
<dbReference type="GO" id="GO:0042742">
    <property type="term" value="P:defense response to bacterium"/>
    <property type="evidence" value="ECO:0000315"/>
    <property type="project" value="TAIR"/>
</dbReference>
<dbReference type="GO" id="GO:0050832">
    <property type="term" value="P:defense response to fungus"/>
    <property type="evidence" value="ECO:0000314"/>
    <property type="project" value="TAIR"/>
</dbReference>
<dbReference type="GO" id="GO:0002213">
    <property type="term" value="P:defense response to insect"/>
    <property type="evidence" value="ECO:0000315"/>
    <property type="project" value="TAIR"/>
</dbReference>
<dbReference type="GO" id="GO:0019760">
    <property type="term" value="P:glucosinolate metabolic process"/>
    <property type="evidence" value="ECO:0000315"/>
    <property type="project" value="TAIR"/>
</dbReference>
<dbReference type="GO" id="GO:0009759">
    <property type="term" value="P:indole glucosinolate biosynthetic process"/>
    <property type="evidence" value="ECO:0000315"/>
    <property type="project" value="TAIR"/>
</dbReference>
<dbReference type="GO" id="GO:0042343">
    <property type="term" value="P:indole glucosinolate metabolic process"/>
    <property type="evidence" value="ECO:0000315"/>
    <property type="project" value="TAIR"/>
</dbReference>
<dbReference type="GO" id="GO:0009682">
    <property type="term" value="P:induced systemic resistance"/>
    <property type="evidence" value="ECO:0000315"/>
    <property type="project" value="TAIR"/>
</dbReference>
<dbReference type="GO" id="GO:0009617">
    <property type="term" value="P:response to bacterium"/>
    <property type="evidence" value="ECO:0000315"/>
    <property type="project" value="TAIR"/>
</dbReference>
<dbReference type="CDD" id="cd20653">
    <property type="entry name" value="CYP81"/>
    <property type="match status" value="1"/>
</dbReference>
<dbReference type="FunFam" id="1.10.630.10:FF:000023">
    <property type="entry name" value="Cytochrome P450 family protein"/>
    <property type="match status" value="1"/>
</dbReference>
<dbReference type="Gene3D" id="1.10.630.10">
    <property type="entry name" value="Cytochrome P450"/>
    <property type="match status" value="1"/>
</dbReference>
<dbReference type="InterPro" id="IPR001128">
    <property type="entry name" value="Cyt_P450"/>
</dbReference>
<dbReference type="InterPro" id="IPR017972">
    <property type="entry name" value="Cyt_P450_CS"/>
</dbReference>
<dbReference type="InterPro" id="IPR002401">
    <property type="entry name" value="Cyt_P450_E_grp-I"/>
</dbReference>
<dbReference type="InterPro" id="IPR036396">
    <property type="entry name" value="Cyt_P450_sf"/>
</dbReference>
<dbReference type="InterPro" id="IPR050651">
    <property type="entry name" value="Plant_Cytochrome_P450_Monoox"/>
</dbReference>
<dbReference type="PANTHER" id="PTHR47947">
    <property type="entry name" value="CYTOCHROME P450 82C3-RELATED"/>
    <property type="match status" value="1"/>
</dbReference>
<dbReference type="PANTHER" id="PTHR47947:SF62">
    <property type="entry name" value="CYTOCHROME P450, FAMILY 81, SUBFAMILY D, POLYPEPTIDE 5"/>
    <property type="match status" value="1"/>
</dbReference>
<dbReference type="Pfam" id="PF00067">
    <property type="entry name" value="p450"/>
    <property type="match status" value="1"/>
</dbReference>
<dbReference type="PRINTS" id="PR00463">
    <property type="entry name" value="EP450I"/>
</dbReference>
<dbReference type="PRINTS" id="PR00385">
    <property type="entry name" value="P450"/>
</dbReference>
<dbReference type="SUPFAM" id="SSF48264">
    <property type="entry name" value="Cytochrome P450"/>
    <property type="match status" value="1"/>
</dbReference>
<dbReference type="PROSITE" id="PS00086">
    <property type="entry name" value="CYTOCHROME_P450"/>
    <property type="match status" value="1"/>
</dbReference>
<accession>Q9LVD6</accession>
<name>C81F2_ARATH</name>
<feature type="chain" id="PRO_0000435492" description="Cytochrome P450 81F2">
    <location>
        <begin position="1"/>
        <end position="491"/>
    </location>
</feature>
<feature type="transmembrane region" description="Helical" evidence="2">
    <location>
        <begin position="283"/>
        <end position="303"/>
    </location>
</feature>
<feature type="binding site" description="axial binding residue" evidence="1">
    <location>
        <position position="429"/>
    </location>
    <ligand>
        <name>heme</name>
        <dbReference type="ChEBI" id="CHEBI:30413"/>
    </ligand>
    <ligandPart>
        <name>Fe</name>
        <dbReference type="ChEBI" id="CHEBI:18248"/>
    </ligandPart>
</feature>
<comment type="function">
    <text evidence="3 4 5 6 7">Involved in indole glucosinolate biosynthesis. Catalyzes hydroxylation reactions of the glucosinolate indole ring. Converts indol-3-yl-methylglucosinolate (I3M) to 4-hydroxy-indol-3-yl-methylglucosinolate (4OH-I3M) and/or 1-hydroxy-indol-3-yl-methylglucosinolate (1OH-I3M) intermediates. These hydroxy intermediates are converted to 4-methoxy-indol-3-yl-methylglucosinolate (4MO-I3M) and 1-methoxy-indol-3-yl-methylglucosinolate (1MO-I3M) by indole glucosinolate methyltransferase 1 and 2 (IGMT1 and IGMT2) (PubMed:21317374). Contributes to defense against the green peach aphid (Myzus persicae), a generalist phloem-feeding herbivore (PubMed:19293369). Required for the biosynthesis of antifungal indole glucosinolate metabolites (PubMed:19095900, PubMed:20408997, PubMed:20605856, PubMed:21317374). Required for the pathogen-induced accumulation of 4MO-I3M, which in turn is activated by the atypical BGLU26/PEN2 myrosinase (PubMed:19095900). Required for the biosynthesis of Trp-derived antifungal compounds and non-host resistance to the necrotrophic fungal pathogen Plectosphaerella cucumerina (PubMed:20408997). Required for resistance to the non-adapted fungal pathogen Colletotrichum gloeosporioides (PubMed:20605856).</text>
</comment>
<comment type="cofactor">
    <cofactor evidence="1">
        <name>heme</name>
        <dbReference type="ChEBI" id="CHEBI:30413"/>
    </cofactor>
</comment>
<comment type="pathway">
    <text evidence="11">Secondary metabolite biosynthesis.</text>
</comment>
<comment type="subcellular location">
    <subcellularLocation>
        <location evidence="2">Membrane</location>
        <topology evidence="2">Single-pass membrane protein</topology>
    </subcellularLocation>
</comment>
<comment type="induction">
    <text evidence="8">By beta-aminobutyric acid (BABA) and elicitors of pattern-triggered immunity (PTI), such as flg22 and elf26 peptides.</text>
</comment>
<comment type="similarity">
    <text evidence="11">Belongs to the cytochrome P450 family.</text>
</comment>
<proteinExistence type="evidence at transcript level"/>
<evidence type="ECO:0000250" key="1">
    <source>
        <dbReference type="UniProtKB" id="Q96242"/>
    </source>
</evidence>
<evidence type="ECO:0000255" key="2"/>
<evidence type="ECO:0000269" key="3">
    <source>
    </source>
</evidence>
<evidence type="ECO:0000269" key="4">
    <source>
    </source>
</evidence>
<evidence type="ECO:0000269" key="5">
    <source>
    </source>
</evidence>
<evidence type="ECO:0000269" key="6">
    <source>
    </source>
</evidence>
<evidence type="ECO:0000269" key="7">
    <source>
    </source>
</evidence>
<evidence type="ECO:0000269" key="8">
    <source>
    </source>
</evidence>
<evidence type="ECO:0000303" key="9">
    <source>
    </source>
</evidence>
<evidence type="ECO:0000303" key="10">
    <source>
    </source>
</evidence>
<evidence type="ECO:0000305" key="11"/>
<evidence type="ECO:0000312" key="12">
    <source>
        <dbReference type="Araport" id="AT5G57220"/>
    </source>
</evidence>
<evidence type="ECO:0000312" key="13">
    <source>
        <dbReference type="EMBL" id="BAA96945.1"/>
    </source>
</evidence>
<sequence>MDYVLIVLPLALFLIAYKFLFSSKTQGFNLPPGPTPFPIVGHLHLVKPPVHRLFRRFAEKYGDIFSLRYGSRQVVVISSLPLVRESFTGQNDVILTNRPHFLTAKYVAYDYTTIGTAAYGDHWRNLRRICSLEILSSNRLTGFLSVRKDEIRRLLTKLSREYDGRVVELEPLLADLTFNNIVRMVTGRRYYGDQVHNKEEANLFKKLVTDINDNSGASHPGDYLPILKVFGHGYEKKVKALGEAMDAFLQRLLDECRINGESNTMVSHLLSLQLDQPKYYSDVIIKGLMLSMMLAGTDTAAVTLEWAMANLLKKPEVLKKAKAEIDEKIGEERLVDEPDIANLPYLQNIVSETFRLCPAAPLLVPRSPSEDLKIGGYDIPRGTIVLVNAWAIHRDPRLWDEPEKFMPERFEDQEASKKLMVFGNGRRTCPGATLGQRMVLLALGSLIQCFDWEKVNGEDVDMTENPGMAMRKLVQLRAVCHKRPIMTNLLA</sequence>
<organism>
    <name type="scientific">Arabidopsis thaliana</name>
    <name type="common">Mouse-ear cress</name>
    <dbReference type="NCBI Taxonomy" id="3702"/>
    <lineage>
        <taxon>Eukaryota</taxon>
        <taxon>Viridiplantae</taxon>
        <taxon>Streptophyta</taxon>
        <taxon>Embryophyta</taxon>
        <taxon>Tracheophyta</taxon>
        <taxon>Spermatophyta</taxon>
        <taxon>Magnoliopsida</taxon>
        <taxon>eudicotyledons</taxon>
        <taxon>Gunneridae</taxon>
        <taxon>Pentapetalae</taxon>
        <taxon>rosids</taxon>
        <taxon>malvids</taxon>
        <taxon>Brassicales</taxon>
        <taxon>Brassicaceae</taxon>
        <taxon>Camelineae</taxon>
        <taxon>Arabidopsis</taxon>
    </lineage>
</organism>